<dbReference type="EMBL" id="AP009484">
    <property type="protein sequence ID" value="BAH16920.1"/>
    <property type="molecule type" value="Genomic_DNA"/>
</dbReference>
<dbReference type="RefSeq" id="WP_012656123.1">
    <property type="nucleotide sequence ID" value="NC_011999.1"/>
</dbReference>
<dbReference type="SMR" id="B9E9K9"/>
<dbReference type="STRING" id="458233.MCCL_0213"/>
<dbReference type="GeneID" id="61130635"/>
<dbReference type="KEGG" id="mcl:MCCL_0213"/>
<dbReference type="eggNOG" id="COG1841">
    <property type="taxonomic scope" value="Bacteria"/>
</dbReference>
<dbReference type="HOGENOM" id="CLU_131047_2_1_9"/>
<dbReference type="OrthoDB" id="9812790at2"/>
<dbReference type="Proteomes" id="UP000001383">
    <property type="component" value="Chromosome"/>
</dbReference>
<dbReference type="GO" id="GO:0022625">
    <property type="term" value="C:cytosolic large ribosomal subunit"/>
    <property type="evidence" value="ECO:0007669"/>
    <property type="project" value="TreeGrafter"/>
</dbReference>
<dbReference type="GO" id="GO:0003735">
    <property type="term" value="F:structural constituent of ribosome"/>
    <property type="evidence" value="ECO:0007669"/>
    <property type="project" value="InterPro"/>
</dbReference>
<dbReference type="GO" id="GO:0006412">
    <property type="term" value="P:translation"/>
    <property type="evidence" value="ECO:0007669"/>
    <property type="project" value="UniProtKB-UniRule"/>
</dbReference>
<dbReference type="CDD" id="cd01658">
    <property type="entry name" value="Ribosomal_L30"/>
    <property type="match status" value="1"/>
</dbReference>
<dbReference type="FunFam" id="3.30.1390.20:FF:000001">
    <property type="entry name" value="50S ribosomal protein L30"/>
    <property type="match status" value="1"/>
</dbReference>
<dbReference type="Gene3D" id="3.30.1390.20">
    <property type="entry name" value="Ribosomal protein L30, ferredoxin-like fold domain"/>
    <property type="match status" value="1"/>
</dbReference>
<dbReference type="HAMAP" id="MF_01371_B">
    <property type="entry name" value="Ribosomal_uL30_B"/>
    <property type="match status" value="1"/>
</dbReference>
<dbReference type="InterPro" id="IPR036919">
    <property type="entry name" value="Ribo_uL30_ferredoxin-like_sf"/>
</dbReference>
<dbReference type="InterPro" id="IPR005996">
    <property type="entry name" value="Ribosomal_uL30_bac-type"/>
</dbReference>
<dbReference type="InterPro" id="IPR016082">
    <property type="entry name" value="Ribosomal_uL30_ferredoxin-like"/>
</dbReference>
<dbReference type="NCBIfam" id="TIGR01308">
    <property type="entry name" value="rpmD_bact"/>
    <property type="match status" value="1"/>
</dbReference>
<dbReference type="PANTHER" id="PTHR15892:SF2">
    <property type="entry name" value="LARGE RIBOSOMAL SUBUNIT PROTEIN UL30M"/>
    <property type="match status" value="1"/>
</dbReference>
<dbReference type="PANTHER" id="PTHR15892">
    <property type="entry name" value="MITOCHONDRIAL RIBOSOMAL PROTEIN L30"/>
    <property type="match status" value="1"/>
</dbReference>
<dbReference type="Pfam" id="PF00327">
    <property type="entry name" value="Ribosomal_L30"/>
    <property type="match status" value="1"/>
</dbReference>
<dbReference type="PIRSF" id="PIRSF002211">
    <property type="entry name" value="Ribosomal_L30_bac-type"/>
    <property type="match status" value="1"/>
</dbReference>
<dbReference type="SUPFAM" id="SSF55129">
    <property type="entry name" value="Ribosomal protein L30p/L7e"/>
    <property type="match status" value="1"/>
</dbReference>
<protein>
    <recommendedName>
        <fullName evidence="1">Large ribosomal subunit protein uL30</fullName>
    </recommendedName>
    <alternativeName>
        <fullName evidence="2">50S ribosomal protein L30</fullName>
    </alternativeName>
</protein>
<reference key="1">
    <citation type="journal article" date="2009" name="J. Bacteriol.">
        <title>Complete genome sequence of Macrococcus caseolyticus strain JCSCS5402, reflecting the ancestral genome of the human-pathogenic staphylococci.</title>
        <authorList>
            <person name="Baba T."/>
            <person name="Kuwahara-Arai K."/>
            <person name="Uchiyama I."/>
            <person name="Takeuchi F."/>
            <person name="Ito T."/>
            <person name="Hiramatsu K."/>
        </authorList>
    </citation>
    <scope>NUCLEOTIDE SEQUENCE [LARGE SCALE GENOMIC DNA]</scope>
    <source>
        <strain>JCSC5402</strain>
    </source>
</reference>
<comment type="subunit">
    <text evidence="1">Part of the 50S ribosomal subunit.</text>
</comment>
<comment type="similarity">
    <text evidence="1">Belongs to the universal ribosomal protein uL30 family.</text>
</comment>
<organism>
    <name type="scientific">Macrococcus caseolyticus (strain JCSC5402)</name>
    <name type="common">Macrococcoides caseolyticum</name>
    <dbReference type="NCBI Taxonomy" id="458233"/>
    <lineage>
        <taxon>Bacteria</taxon>
        <taxon>Bacillati</taxon>
        <taxon>Bacillota</taxon>
        <taxon>Bacilli</taxon>
        <taxon>Bacillales</taxon>
        <taxon>Staphylococcaceae</taxon>
        <taxon>Macrococcoides</taxon>
    </lineage>
</organism>
<name>RL30_MACCJ</name>
<proteinExistence type="inferred from homology"/>
<sequence length="59" mass="6566">MAKIQITLTRSIIGRPETQRKTVKALGLTKMHSSVEVEDNPAIRGQINKVSHLVTVKEL</sequence>
<gene>
    <name evidence="1" type="primary">rpmD</name>
    <name type="ordered locus">MCCL_0213</name>
</gene>
<accession>B9E9K9</accession>
<evidence type="ECO:0000255" key="1">
    <source>
        <dbReference type="HAMAP-Rule" id="MF_01371"/>
    </source>
</evidence>
<evidence type="ECO:0000305" key="2"/>
<keyword id="KW-1185">Reference proteome</keyword>
<keyword id="KW-0687">Ribonucleoprotein</keyword>
<keyword id="KW-0689">Ribosomal protein</keyword>
<feature type="chain" id="PRO_1000184149" description="Large ribosomal subunit protein uL30">
    <location>
        <begin position="1"/>
        <end position="59"/>
    </location>
</feature>